<keyword id="KW-0272">Extracellular matrix</keyword>
<keyword id="KW-0325">Glycoprotein</keyword>
<keyword id="KW-0433">Leucine-rich repeat</keyword>
<keyword id="KW-0654">Proteoglycan</keyword>
<keyword id="KW-1185">Reference proteome</keyword>
<keyword id="KW-0677">Repeat</keyword>
<keyword id="KW-0964">Secreted</keyword>
<keyword id="KW-0765">Sulfation</keyword>
<name>FMOD_PIG</name>
<accession>Q9TTB4</accession>
<organism>
    <name type="scientific">Sus scrofa</name>
    <name type="common">Pig</name>
    <dbReference type="NCBI Taxonomy" id="9823"/>
    <lineage>
        <taxon>Eukaryota</taxon>
        <taxon>Metazoa</taxon>
        <taxon>Chordata</taxon>
        <taxon>Craniata</taxon>
        <taxon>Vertebrata</taxon>
        <taxon>Euteleostomi</taxon>
        <taxon>Mammalia</taxon>
        <taxon>Eutheria</taxon>
        <taxon>Laurasiatheria</taxon>
        <taxon>Artiodactyla</taxon>
        <taxon>Suina</taxon>
        <taxon>Suidae</taxon>
        <taxon>Sus</taxon>
    </lineage>
</organism>
<dbReference type="EMBL" id="AF159383">
    <property type="protein sequence ID" value="AAF19154.1"/>
    <property type="molecule type" value="mRNA"/>
</dbReference>
<dbReference type="SMR" id="Q9TTB4"/>
<dbReference type="STRING" id="9823.ENSSSCP00000016193"/>
<dbReference type="GlyCosmos" id="Q9TTB4">
    <property type="glycosylation" value="3 sites, No reported glycans"/>
</dbReference>
<dbReference type="GlyGen" id="Q9TTB4">
    <property type="glycosylation" value="3 sites"/>
</dbReference>
<dbReference type="PaxDb" id="9823-ENSSSCP00000016193"/>
<dbReference type="PeptideAtlas" id="Q9TTB4"/>
<dbReference type="eggNOG" id="KOG0619">
    <property type="taxonomic scope" value="Eukaryota"/>
</dbReference>
<dbReference type="HOGENOM" id="CLU_000288_186_4_1"/>
<dbReference type="InParanoid" id="Q9TTB4"/>
<dbReference type="Proteomes" id="UP000008227">
    <property type="component" value="Unplaced"/>
</dbReference>
<dbReference type="Proteomes" id="UP000314985">
    <property type="component" value="Unplaced"/>
</dbReference>
<dbReference type="Proteomes" id="UP000694570">
    <property type="component" value="Unplaced"/>
</dbReference>
<dbReference type="Proteomes" id="UP000694571">
    <property type="component" value="Unplaced"/>
</dbReference>
<dbReference type="Proteomes" id="UP000694720">
    <property type="component" value="Unplaced"/>
</dbReference>
<dbReference type="Proteomes" id="UP000694722">
    <property type="component" value="Unplaced"/>
</dbReference>
<dbReference type="Proteomes" id="UP000694723">
    <property type="component" value="Unplaced"/>
</dbReference>
<dbReference type="Proteomes" id="UP000694724">
    <property type="component" value="Unplaced"/>
</dbReference>
<dbReference type="Proteomes" id="UP000694725">
    <property type="component" value="Unplaced"/>
</dbReference>
<dbReference type="Proteomes" id="UP000694726">
    <property type="component" value="Unplaced"/>
</dbReference>
<dbReference type="Proteomes" id="UP000694727">
    <property type="component" value="Unplaced"/>
</dbReference>
<dbReference type="Proteomes" id="UP000694728">
    <property type="component" value="Unplaced"/>
</dbReference>
<dbReference type="GO" id="GO:0005615">
    <property type="term" value="C:extracellular space"/>
    <property type="evidence" value="ECO:0000318"/>
    <property type="project" value="GO_Central"/>
</dbReference>
<dbReference type="FunFam" id="3.80.10.10:FF:000217">
    <property type="entry name" value="fibromodulin"/>
    <property type="match status" value="1"/>
</dbReference>
<dbReference type="Gene3D" id="3.80.10.10">
    <property type="entry name" value="Ribonuclease Inhibitor"/>
    <property type="match status" value="2"/>
</dbReference>
<dbReference type="InterPro" id="IPR001611">
    <property type="entry name" value="Leu-rich_rpt"/>
</dbReference>
<dbReference type="InterPro" id="IPR003591">
    <property type="entry name" value="Leu-rich_rpt_typical-subtyp"/>
</dbReference>
<dbReference type="InterPro" id="IPR032675">
    <property type="entry name" value="LRR_dom_sf"/>
</dbReference>
<dbReference type="InterPro" id="IPR050333">
    <property type="entry name" value="SLRP"/>
</dbReference>
<dbReference type="PANTHER" id="PTHR45712">
    <property type="entry name" value="AGAP008170-PA"/>
    <property type="match status" value="1"/>
</dbReference>
<dbReference type="PANTHER" id="PTHR45712:SF4">
    <property type="entry name" value="FIBROMODULIN"/>
    <property type="match status" value="1"/>
</dbReference>
<dbReference type="Pfam" id="PF13855">
    <property type="entry name" value="LRR_8"/>
    <property type="match status" value="2"/>
</dbReference>
<dbReference type="SMART" id="SM00364">
    <property type="entry name" value="LRR_BAC"/>
    <property type="match status" value="3"/>
</dbReference>
<dbReference type="SMART" id="SM00369">
    <property type="entry name" value="LRR_TYP"/>
    <property type="match status" value="4"/>
</dbReference>
<dbReference type="SUPFAM" id="SSF52058">
    <property type="entry name" value="L domain-like"/>
    <property type="match status" value="1"/>
</dbReference>
<dbReference type="PROSITE" id="PS51450">
    <property type="entry name" value="LRR"/>
    <property type="match status" value="6"/>
</dbReference>
<comment type="function">
    <text evidence="1">Affects the rate of fibrils formation. May have a primary role in collagen fibrillogenesis (By similarity).</text>
</comment>
<comment type="subunit">
    <text evidence="1">Binds to type I and type II collagen.</text>
</comment>
<comment type="subcellular location">
    <subcellularLocation>
        <location>Secreted</location>
        <location>Extracellular space</location>
        <location>Extracellular matrix</location>
    </subcellularLocation>
</comment>
<comment type="PTM">
    <text evidence="1">Binds keratan sulfate chains.</text>
</comment>
<comment type="miscellaneous">
    <text>Incorrect gene name (LUM) has been attributed by Ref.1. LUM and FMOD are two different genes but members of the same family.</text>
</comment>
<comment type="similarity">
    <text evidence="2">Belongs to the small leucine-rich proteoglycan (SLRP) family. SLRP class II subfamily.</text>
</comment>
<reference key="1">
    <citation type="submission" date="1999-06" db="EMBL/GenBank/DDBJ databases">
        <title>Cloning and sequencing of porcine matrix molecules.</title>
        <authorList>
            <person name="Wang J.F."/>
            <person name="Boykiw R.H."/>
            <person name="Reno C.R."/>
            <person name="Olson M.E."/>
            <person name="Hart D.A."/>
        </authorList>
    </citation>
    <scope>NUCLEOTIDE SEQUENCE [MRNA]</scope>
    <source>
        <tissue>Skin</tissue>
    </source>
</reference>
<feature type="chain" id="PRO_0000180084" description="Fibromodulin">
    <location>
        <begin position="1" status="less than"/>
        <end position="147" status="greater than"/>
    </location>
</feature>
<feature type="repeat" description="LRR 1">
    <location>
        <begin position="1" status="less than"/>
        <end position="15"/>
    </location>
</feature>
<feature type="repeat" description="LRR 2">
    <location>
        <begin position="16"/>
        <end position="37"/>
    </location>
</feature>
<feature type="repeat" description="LRR 3">
    <location>
        <begin position="40"/>
        <end position="61"/>
    </location>
</feature>
<feature type="repeat" description="LRR 4">
    <location>
        <begin position="63"/>
        <end position="84"/>
    </location>
</feature>
<feature type="repeat" description="LRR 5">
    <location>
        <begin position="85"/>
        <end position="105"/>
    </location>
</feature>
<feature type="repeat" description="LRR 6">
    <location>
        <begin position="108"/>
        <end position="128"/>
    </location>
</feature>
<feature type="repeat" description="LRR 7">
    <location>
        <begin position="133"/>
        <end position="147" status="greater than"/>
    </location>
</feature>
<feature type="glycosylation site" description="N-linked (GlcNAc...) (keratan sulfate) asparagine" evidence="1">
    <location>
        <position position="5"/>
    </location>
</feature>
<feature type="glycosylation site" description="N-linked (GlcNAc...) (keratan sulfate) asparagine" evidence="1">
    <location>
        <position position="40"/>
    </location>
</feature>
<feature type="glycosylation site" description="N-linked (GlcNAc...) (keratan sulfate) asparagine" evidence="1">
    <location>
        <position position="130"/>
    </location>
</feature>
<feature type="non-terminal residue">
    <location>
        <position position="1"/>
    </location>
</feature>
<feature type="non-terminal residue">
    <location>
        <position position="147"/>
    </location>
</feature>
<protein>
    <recommendedName>
        <fullName>Fibromodulin</fullName>
        <shortName>FM</shortName>
    </recommendedName>
    <alternativeName>
        <fullName>Keratan sulfate proteoglycan lumican</fullName>
        <shortName>KSPG fibromodulin</shortName>
    </alternativeName>
</protein>
<proteinExistence type="evidence at transcript level"/>
<gene>
    <name type="primary">FMOD</name>
</gene>
<evidence type="ECO:0000250" key="1"/>
<evidence type="ECO:0000305" key="2"/>
<sequence length="147" mass="16686">LDHNNLTRMPGPLPRSLRELHLDHNQISRVPNNALEGLENLTALYLQHNEIQEVGSSMRGLRSLILLDLSYNHLRKVPDGLPSALEQLYLEHNNVYSVPDSYFRGSPKLLYVRLSHNSLTNNGLASNTFNSSSLLELDLSYNQLQKI</sequence>